<feature type="chain" id="PRO_0000177581" description="Translation initiation factor IF-3">
    <location>
        <begin position="1"/>
        <end position="175"/>
    </location>
</feature>
<reference key="1">
    <citation type="journal article" date="2003" name="Mol. Microbiol.">
        <title>Genome-based analysis of virulence genes in a non-biofilm-forming Staphylococcus epidermidis strain (ATCC 12228).</title>
        <authorList>
            <person name="Zhang Y.-Q."/>
            <person name="Ren S.-X."/>
            <person name="Li H.-L."/>
            <person name="Wang Y.-X."/>
            <person name="Fu G."/>
            <person name="Yang J."/>
            <person name="Qin Z.-Q."/>
            <person name="Miao Y.-G."/>
            <person name="Wang W.-Y."/>
            <person name="Chen R.-S."/>
            <person name="Shen Y."/>
            <person name="Chen Z."/>
            <person name="Yuan Z.-H."/>
            <person name="Zhao G.-P."/>
            <person name="Qu D."/>
            <person name="Danchin A."/>
            <person name="Wen Y.-M."/>
        </authorList>
    </citation>
    <scope>NUCLEOTIDE SEQUENCE [LARGE SCALE GENOMIC DNA]</scope>
    <source>
        <strain>ATCC 12228 / FDA PCI 1200</strain>
    </source>
</reference>
<dbReference type="EMBL" id="AE015929">
    <property type="protein sequence ID" value="AAO04954.1"/>
    <property type="molecule type" value="Genomic_DNA"/>
</dbReference>
<dbReference type="RefSeq" id="NP_764910.1">
    <property type="nucleotide sequence ID" value="NC_004461.1"/>
</dbReference>
<dbReference type="RefSeq" id="WP_001830789.1">
    <property type="nucleotide sequence ID" value="NZ_WBME01000016.1"/>
</dbReference>
<dbReference type="SMR" id="Q8CS75"/>
<dbReference type="GeneID" id="50018530"/>
<dbReference type="KEGG" id="sep:SE_1355"/>
<dbReference type="PATRIC" id="fig|176280.10.peg.1324"/>
<dbReference type="eggNOG" id="COG0290">
    <property type="taxonomic scope" value="Bacteria"/>
</dbReference>
<dbReference type="HOGENOM" id="CLU_054919_3_2_9"/>
<dbReference type="OrthoDB" id="9806014at2"/>
<dbReference type="Proteomes" id="UP000001411">
    <property type="component" value="Chromosome"/>
</dbReference>
<dbReference type="GO" id="GO:0005829">
    <property type="term" value="C:cytosol"/>
    <property type="evidence" value="ECO:0007669"/>
    <property type="project" value="TreeGrafter"/>
</dbReference>
<dbReference type="GO" id="GO:0016020">
    <property type="term" value="C:membrane"/>
    <property type="evidence" value="ECO:0007669"/>
    <property type="project" value="TreeGrafter"/>
</dbReference>
<dbReference type="GO" id="GO:0043022">
    <property type="term" value="F:ribosome binding"/>
    <property type="evidence" value="ECO:0007669"/>
    <property type="project" value="TreeGrafter"/>
</dbReference>
<dbReference type="GO" id="GO:0003743">
    <property type="term" value="F:translation initiation factor activity"/>
    <property type="evidence" value="ECO:0007669"/>
    <property type="project" value="UniProtKB-UniRule"/>
</dbReference>
<dbReference type="GO" id="GO:0032790">
    <property type="term" value="P:ribosome disassembly"/>
    <property type="evidence" value="ECO:0007669"/>
    <property type="project" value="TreeGrafter"/>
</dbReference>
<dbReference type="FunFam" id="3.10.20.80:FF:000001">
    <property type="entry name" value="Translation initiation factor IF-3"/>
    <property type="match status" value="1"/>
</dbReference>
<dbReference type="FunFam" id="3.30.110.10:FF:000001">
    <property type="entry name" value="Translation initiation factor IF-3"/>
    <property type="match status" value="1"/>
</dbReference>
<dbReference type="Gene3D" id="3.30.110.10">
    <property type="entry name" value="Translation initiation factor 3 (IF-3), C-terminal domain"/>
    <property type="match status" value="1"/>
</dbReference>
<dbReference type="Gene3D" id="3.10.20.80">
    <property type="entry name" value="Translation initiation factor 3 (IF-3), N-terminal domain"/>
    <property type="match status" value="1"/>
</dbReference>
<dbReference type="HAMAP" id="MF_00080">
    <property type="entry name" value="IF_3"/>
    <property type="match status" value="1"/>
</dbReference>
<dbReference type="InterPro" id="IPR036788">
    <property type="entry name" value="T_IF-3_C_sf"/>
</dbReference>
<dbReference type="InterPro" id="IPR036787">
    <property type="entry name" value="T_IF-3_N_sf"/>
</dbReference>
<dbReference type="InterPro" id="IPR019813">
    <property type="entry name" value="Translation_initiation_fac3_CS"/>
</dbReference>
<dbReference type="InterPro" id="IPR001288">
    <property type="entry name" value="Translation_initiation_fac_3"/>
</dbReference>
<dbReference type="InterPro" id="IPR019815">
    <property type="entry name" value="Translation_initiation_fac_3_C"/>
</dbReference>
<dbReference type="InterPro" id="IPR019814">
    <property type="entry name" value="Translation_initiation_fac_3_N"/>
</dbReference>
<dbReference type="NCBIfam" id="TIGR00168">
    <property type="entry name" value="infC"/>
    <property type="match status" value="1"/>
</dbReference>
<dbReference type="PANTHER" id="PTHR10938">
    <property type="entry name" value="TRANSLATION INITIATION FACTOR IF-3"/>
    <property type="match status" value="1"/>
</dbReference>
<dbReference type="PANTHER" id="PTHR10938:SF0">
    <property type="entry name" value="TRANSLATION INITIATION FACTOR IF-3, MITOCHONDRIAL"/>
    <property type="match status" value="1"/>
</dbReference>
<dbReference type="Pfam" id="PF00707">
    <property type="entry name" value="IF3_C"/>
    <property type="match status" value="1"/>
</dbReference>
<dbReference type="Pfam" id="PF05198">
    <property type="entry name" value="IF3_N"/>
    <property type="match status" value="1"/>
</dbReference>
<dbReference type="SUPFAM" id="SSF55200">
    <property type="entry name" value="Translation initiation factor IF3, C-terminal domain"/>
    <property type="match status" value="1"/>
</dbReference>
<dbReference type="SUPFAM" id="SSF54364">
    <property type="entry name" value="Translation initiation factor IF3, N-terminal domain"/>
    <property type="match status" value="1"/>
</dbReference>
<dbReference type="PROSITE" id="PS00938">
    <property type="entry name" value="IF3"/>
    <property type="match status" value="1"/>
</dbReference>
<sequence>MSTIAKDQTQINEKIRAKELRLIGQDGEQIGVKSKREALEMAERVDLDLVVVAPNAKPPVARIMDYGKYKFEQQKKEKEMKKKQKVINVKELRLSPTIEEHDFQTKLKNGRKFLSKGDKCKVSIRFRGRAITHKEIGQRVLEKFADECKDIATVEQKPKMEGRQMFIMLAPINEK</sequence>
<protein>
    <recommendedName>
        <fullName evidence="1">Translation initiation factor IF-3</fullName>
    </recommendedName>
</protein>
<gene>
    <name evidence="1" type="primary">infC</name>
    <name type="ordered locus">SE_1355</name>
</gene>
<proteinExistence type="inferred from homology"/>
<organism>
    <name type="scientific">Staphylococcus epidermidis (strain ATCC 12228 / FDA PCI 1200)</name>
    <dbReference type="NCBI Taxonomy" id="176280"/>
    <lineage>
        <taxon>Bacteria</taxon>
        <taxon>Bacillati</taxon>
        <taxon>Bacillota</taxon>
        <taxon>Bacilli</taxon>
        <taxon>Bacillales</taxon>
        <taxon>Staphylococcaceae</taxon>
        <taxon>Staphylococcus</taxon>
    </lineage>
</organism>
<accession>Q8CS75</accession>
<comment type="function">
    <text evidence="1">IF-3 binds to the 30S ribosomal subunit and shifts the equilibrium between 70S ribosomes and their 50S and 30S subunits in favor of the free subunits, thus enhancing the availability of 30S subunits on which protein synthesis initiation begins.</text>
</comment>
<comment type="subunit">
    <text evidence="1">Monomer.</text>
</comment>
<comment type="subcellular location">
    <subcellularLocation>
        <location evidence="1">Cytoplasm</location>
    </subcellularLocation>
</comment>
<comment type="similarity">
    <text evidence="1">Belongs to the IF-3 family.</text>
</comment>
<keyword id="KW-0963">Cytoplasm</keyword>
<keyword id="KW-0396">Initiation factor</keyword>
<keyword id="KW-0648">Protein biosynthesis</keyword>
<name>IF3_STAES</name>
<evidence type="ECO:0000255" key="1">
    <source>
        <dbReference type="HAMAP-Rule" id="MF_00080"/>
    </source>
</evidence>